<dbReference type="EMBL" id="CR855387">
    <property type="status" value="NOT_ANNOTATED_CDS"/>
    <property type="molecule type" value="Genomic_DNA"/>
</dbReference>
<dbReference type="EMBL" id="BC122284">
    <property type="protein sequence ID" value="AAI22285.1"/>
    <property type="molecule type" value="mRNA"/>
</dbReference>
<dbReference type="EMBL" id="BC154733">
    <property type="protein sequence ID" value="AAI54734.1"/>
    <property type="molecule type" value="mRNA"/>
</dbReference>
<dbReference type="EMBL" id="BC157374">
    <property type="protein sequence ID" value="AAI57375.1"/>
    <property type="molecule type" value="mRNA"/>
</dbReference>
<dbReference type="RefSeq" id="NP_001070619.1">
    <property type="nucleotide sequence ID" value="NM_001077151.1"/>
</dbReference>
<dbReference type="SMR" id="A9ULR9"/>
<dbReference type="STRING" id="7955.ENSDARP00000065806"/>
<dbReference type="PaxDb" id="7955-ENSDARP00000065806"/>
<dbReference type="Ensembl" id="ENSDART00000065807">
    <property type="protein sequence ID" value="ENSDARP00000065806"/>
    <property type="gene ID" value="ENSDARG00000044769"/>
</dbReference>
<dbReference type="GeneID" id="100000647"/>
<dbReference type="KEGG" id="dre:100000647"/>
<dbReference type="AGR" id="ZFIN:ZDB-GENE-060825-162"/>
<dbReference type="CTD" id="253980"/>
<dbReference type="ZFIN" id="ZDB-GENE-060825-162">
    <property type="gene designation" value="kctd13"/>
</dbReference>
<dbReference type="eggNOG" id="KOG2716">
    <property type="taxonomic scope" value="Eukaryota"/>
</dbReference>
<dbReference type="HOGENOM" id="CLU_060008_0_0_1"/>
<dbReference type="InParanoid" id="A9ULR9"/>
<dbReference type="OMA" id="GCRIPMI"/>
<dbReference type="OrthoDB" id="2333377at2759"/>
<dbReference type="PhylomeDB" id="A9ULR9"/>
<dbReference type="TreeFam" id="TF315649"/>
<dbReference type="Reactome" id="R-DRE-9696264">
    <property type="pathway name" value="RND3 GTPase cycle"/>
</dbReference>
<dbReference type="Reactome" id="R-DRE-9696270">
    <property type="pathway name" value="RND2 GTPase cycle"/>
</dbReference>
<dbReference type="PRO" id="PR:A9ULR9"/>
<dbReference type="Proteomes" id="UP000000437">
    <property type="component" value="Alternate scaffold 3"/>
</dbReference>
<dbReference type="Proteomes" id="UP000000437">
    <property type="component" value="Chromosome 3"/>
</dbReference>
<dbReference type="Bgee" id="ENSDARG00000044769">
    <property type="expression patterns" value="Expressed in brain and 22 other cell types or tissues"/>
</dbReference>
<dbReference type="GO" id="GO:0031463">
    <property type="term" value="C:Cul3-RING ubiquitin ligase complex"/>
    <property type="evidence" value="ECO:0000318"/>
    <property type="project" value="GO_Central"/>
</dbReference>
<dbReference type="GO" id="GO:0005634">
    <property type="term" value="C:nucleus"/>
    <property type="evidence" value="ECO:0007669"/>
    <property type="project" value="UniProtKB-SubCell"/>
</dbReference>
<dbReference type="GO" id="GO:0007420">
    <property type="term" value="P:brain development"/>
    <property type="evidence" value="ECO:0000315"/>
    <property type="project" value="ZFIN"/>
</dbReference>
<dbReference type="GO" id="GO:0021952">
    <property type="term" value="P:central nervous system projection neuron axonogenesis"/>
    <property type="evidence" value="ECO:0000315"/>
    <property type="project" value="ZFIN"/>
</dbReference>
<dbReference type="GO" id="GO:0060322">
    <property type="term" value="P:head development"/>
    <property type="evidence" value="ECO:0000315"/>
    <property type="project" value="ZFIN"/>
</dbReference>
<dbReference type="GO" id="GO:0035024">
    <property type="term" value="P:negative regulation of Rho protein signal transduction"/>
    <property type="evidence" value="ECO:0000315"/>
    <property type="project" value="UniProtKB"/>
</dbReference>
<dbReference type="GO" id="GO:0061351">
    <property type="term" value="P:neural precursor cell proliferation"/>
    <property type="evidence" value="ECO:0000315"/>
    <property type="project" value="ZFIN"/>
</dbReference>
<dbReference type="GO" id="GO:0043065">
    <property type="term" value="P:positive regulation of apoptotic process"/>
    <property type="evidence" value="ECO:0000315"/>
    <property type="project" value="ZFIN"/>
</dbReference>
<dbReference type="GO" id="GO:0043161">
    <property type="term" value="P:proteasome-mediated ubiquitin-dependent protein catabolic process"/>
    <property type="evidence" value="ECO:0000318"/>
    <property type="project" value="GO_Central"/>
</dbReference>
<dbReference type="GO" id="GO:0051260">
    <property type="term" value="P:protein homooligomerization"/>
    <property type="evidence" value="ECO:0007669"/>
    <property type="project" value="InterPro"/>
</dbReference>
<dbReference type="GO" id="GO:0016567">
    <property type="term" value="P:protein ubiquitination"/>
    <property type="evidence" value="ECO:0000318"/>
    <property type="project" value="GO_Central"/>
</dbReference>
<dbReference type="CDD" id="cd18400">
    <property type="entry name" value="BTB_POZ_KCTD13_BACURD1"/>
    <property type="match status" value="1"/>
</dbReference>
<dbReference type="FunFam" id="3.30.710.10:FF:000046">
    <property type="entry name" value="BTB/POZ domain-containing protein KCTD7 isoform X1"/>
    <property type="match status" value="1"/>
</dbReference>
<dbReference type="Gene3D" id="3.30.710.10">
    <property type="entry name" value="Potassium Channel Kv1.1, Chain A"/>
    <property type="match status" value="1"/>
</dbReference>
<dbReference type="InterPro" id="IPR045068">
    <property type="entry name" value="BACURD1-3"/>
</dbReference>
<dbReference type="InterPro" id="IPR000210">
    <property type="entry name" value="BTB/POZ_dom"/>
</dbReference>
<dbReference type="InterPro" id="IPR011333">
    <property type="entry name" value="SKP1/BTB/POZ_sf"/>
</dbReference>
<dbReference type="InterPro" id="IPR003131">
    <property type="entry name" value="T1-type_BTB"/>
</dbReference>
<dbReference type="PANTHER" id="PTHR11145">
    <property type="entry name" value="BTB/POZ DOMAIN-CONTAINING ADAPTER FOR CUL3-MEDIATED RHOA DEGRADATION PROTEIN FAMILY MEMBER"/>
    <property type="match status" value="1"/>
</dbReference>
<dbReference type="PANTHER" id="PTHR11145:SF26">
    <property type="entry name" value="BTB_POZ DOMAIN-CONTAINING ADAPTER FOR CUL3-MEDIATED RHOA DEGRADATION PROTEIN 1"/>
    <property type="match status" value="1"/>
</dbReference>
<dbReference type="Pfam" id="PF02214">
    <property type="entry name" value="BTB_2"/>
    <property type="match status" value="1"/>
</dbReference>
<dbReference type="SMART" id="SM00225">
    <property type="entry name" value="BTB"/>
    <property type="match status" value="1"/>
</dbReference>
<dbReference type="SUPFAM" id="SSF54695">
    <property type="entry name" value="POZ domain"/>
    <property type="match status" value="1"/>
</dbReference>
<organism>
    <name type="scientific">Danio rerio</name>
    <name type="common">Zebrafish</name>
    <name type="synonym">Brachydanio rerio</name>
    <dbReference type="NCBI Taxonomy" id="7955"/>
    <lineage>
        <taxon>Eukaryota</taxon>
        <taxon>Metazoa</taxon>
        <taxon>Chordata</taxon>
        <taxon>Craniata</taxon>
        <taxon>Vertebrata</taxon>
        <taxon>Euteleostomi</taxon>
        <taxon>Actinopterygii</taxon>
        <taxon>Neopterygii</taxon>
        <taxon>Teleostei</taxon>
        <taxon>Ostariophysi</taxon>
        <taxon>Cypriniformes</taxon>
        <taxon>Danionidae</taxon>
        <taxon>Danioninae</taxon>
        <taxon>Danio</taxon>
    </lineage>
</organism>
<accession>A9ULR9</accession>
<accession>A8WGJ2</accession>
<accession>Q0P444</accession>
<keyword id="KW-0539">Nucleus</keyword>
<keyword id="KW-1185">Reference proteome</keyword>
<keyword id="KW-0833">Ubl conjugation pathway</keyword>
<comment type="function">
    <text evidence="1 8">Substrate-specific adapter of a BCR (BTB-CUL3-RBX1) E3 ubiquitin-protein ligase complex required for synaptic transmission (By similarity). The BCR(KCTD13) E3 ubiquitin ligase complex mediates the ubiquitination of RHOA, leading to its degradation by the proteasome, thereby regulating the actin cytoskeleton and promoting synaptic transmission (PubMed:29088697).</text>
</comment>
<comment type="subcellular location">
    <subcellularLocation>
        <location evidence="2">Nucleus</location>
    </subcellularLocation>
</comment>
<comment type="disruption phenotype">
    <text evidence="6">Increased levels of RHOA. N ochange in brain size or neural progenitor cell proliferation is observed.</text>
</comment>
<comment type="similarity">
    <text evidence="7">Belongs to the BACURD family.</text>
</comment>
<comment type="caution">
    <text evidence="5 6">According to a first report, morpholino-mediated knockdown of kctd13 leads to increased brain size and cell proliferation (PubMed:22596160). However, it was later shown that deletion of kctd13 does not cause any change in brain size or cell proliferation (PubMed:29088697). Experimental conditions used may explain discrepancies. A possible explanation being that morpholinos used in the first study, may have affected off-targets.</text>
</comment>
<protein>
    <recommendedName>
        <fullName>BTB/POZ domain-containing adapter for CUL3-mediated RhoA degradation protein 1</fullName>
    </recommendedName>
    <alternativeName>
        <fullName>BTB/POZ domain-containing protein KCTD13</fullName>
    </alternativeName>
</protein>
<proteinExistence type="evidence at transcript level"/>
<evidence type="ECO:0000250" key="1">
    <source>
        <dbReference type="UniProtKB" id="Q8BGV7"/>
    </source>
</evidence>
<evidence type="ECO:0000250" key="2">
    <source>
        <dbReference type="UniProtKB" id="Q8WZ19"/>
    </source>
</evidence>
<evidence type="ECO:0000255" key="3">
    <source>
        <dbReference type="PROSITE-ProRule" id="PRU00037"/>
    </source>
</evidence>
<evidence type="ECO:0000256" key="4">
    <source>
        <dbReference type="SAM" id="MobiDB-lite"/>
    </source>
</evidence>
<evidence type="ECO:0000269" key="5">
    <source>
    </source>
</evidence>
<evidence type="ECO:0000269" key="6">
    <source>
    </source>
</evidence>
<evidence type="ECO:0000305" key="7"/>
<evidence type="ECO:0000305" key="8">
    <source>
    </source>
</evidence>
<evidence type="ECO:0000312" key="9">
    <source>
        <dbReference type="ZFIN" id="ZDB-GENE-060825-162"/>
    </source>
</evidence>
<name>BACD1_DANRE</name>
<feature type="chain" id="PRO_0000442771" description="BTB/POZ domain-containing adapter for CUL3-mediated RhoA degradation protein 1">
    <location>
        <begin position="1"/>
        <end position="330"/>
    </location>
</feature>
<feature type="domain" description="BTB" evidence="3">
    <location>
        <begin position="40"/>
        <end position="108"/>
    </location>
</feature>
<feature type="region of interest" description="Disordered" evidence="4">
    <location>
        <begin position="1"/>
        <end position="34"/>
    </location>
</feature>
<feature type="region of interest" description="Disordered" evidence="4">
    <location>
        <begin position="282"/>
        <end position="304"/>
    </location>
</feature>
<feature type="compositionally biased region" description="Low complexity" evidence="4">
    <location>
        <begin position="282"/>
        <end position="291"/>
    </location>
</feature>
<feature type="sequence conflict" description="In Ref. 2; AAI54734." evidence="7" ref="2">
    <original>E</original>
    <variation>D</variation>
    <location>
        <position position="29"/>
    </location>
</feature>
<feature type="sequence conflict" description="In Ref. 2; AAI54734." evidence="7" ref="2">
    <original>S</original>
    <variation>T</variation>
    <location>
        <position position="134"/>
    </location>
</feature>
<feature type="sequence conflict" description="In Ref. 2; AAI22285." evidence="7" ref="2">
    <original>T</original>
    <variation>I</variation>
    <location>
        <position position="135"/>
    </location>
</feature>
<feature type="sequence conflict" description="In Ref. 2; AAI54734." evidence="7" ref="2">
    <original>K</original>
    <variation>E</variation>
    <location>
        <position position="192"/>
    </location>
</feature>
<feature type="sequence conflict" description="In Ref. 2; AAI54734." evidence="7" ref="2">
    <original>K</original>
    <variation>E</variation>
    <location>
        <position position="249"/>
    </location>
</feature>
<sequence>MSAEASGSSGGHAVTVSGSSPSSSSHVGEEKPGRSLVSSKYVKLNVGGTLHYTTVQTLSKEDSLLRSICDGSTEVSIDSEGWVVLDRCGRHFSLVLNFLRDGTVPLPDSTRELEEVLKEAQYYRLQGLVQHCLSTLQKRRDVCRGCHIPMITSAKEEQRMIATCRKPVVKLQNNRGNNKYSYTSNSDDNLLKNIELFDKLGLRFNGRVLFIKDVLGDEICCWSFYGEGRKIAEVCCTSIVYATEKKQTKVEFPEARIFEETLNILIYENGRGSGGMALLESGGVSSSGAGQSEEEGAGAGGGDRRVRRIHVRRHIMHDERGHGQQTVYKD</sequence>
<reference key="1">
    <citation type="journal article" date="2013" name="Nature">
        <title>The zebrafish reference genome sequence and its relationship to the human genome.</title>
        <authorList>
            <person name="Howe K."/>
            <person name="Clark M.D."/>
            <person name="Torroja C.F."/>
            <person name="Torrance J."/>
            <person name="Berthelot C."/>
            <person name="Muffato M."/>
            <person name="Collins J.E."/>
            <person name="Humphray S."/>
            <person name="McLaren K."/>
            <person name="Matthews L."/>
            <person name="McLaren S."/>
            <person name="Sealy I."/>
            <person name="Caccamo M."/>
            <person name="Churcher C."/>
            <person name="Scott C."/>
            <person name="Barrett J.C."/>
            <person name="Koch R."/>
            <person name="Rauch G.J."/>
            <person name="White S."/>
            <person name="Chow W."/>
            <person name="Kilian B."/>
            <person name="Quintais L.T."/>
            <person name="Guerra-Assuncao J.A."/>
            <person name="Zhou Y."/>
            <person name="Gu Y."/>
            <person name="Yen J."/>
            <person name="Vogel J.H."/>
            <person name="Eyre T."/>
            <person name="Redmond S."/>
            <person name="Banerjee R."/>
            <person name="Chi J."/>
            <person name="Fu B."/>
            <person name="Langley E."/>
            <person name="Maguire S.F."/>
            <person name="Laird G.K."/>
            <person name="Lloyd D."/>
            <person name="Kenyon E."/>
            <person name="Donaldson S."/>
            <person name="Sehra H."/>
            <person name="Almeida-King J."/>
            <person name="Loveland J."/>
            <person name="Trevanion S."/>
            <person name="Jones M."/>
            <person name="Quail M."/>
            <person name="Willey D."/>
            <person name="Hunt A."/>
            <person name="Burton J."/>
            <person name="Sims S."/>
            <person name="McLay K."/>
            <person name="Plumb B."/>
            <person name="Davis J."/>
            <person name="Clee C."/>
            <person name="Oliver K."/>
            <person name="Clark R."/>
            <person name="Riddle C."/>
            <person name="Elliot D."/>
            <person name="Threadgold G."/>
            <person name="Harden G."/>
            <person name="Ware D."/>
            <person name="Begum S."/>
            <person name="Mortimore B."/>
            <person name="Kerry G."/>
            <person name="Heath P."/>
            <person name="Phillimore B."/>
            <person name="Tracey A."/>
            <person name="Corby N."/>
            <person name="Dunn M."/>
            <person name="Johnson C."/>
            <person name="Wood J."/>
            <person name="Clark S."/>
            <person name="Pelan S."/>
            <person name="Griffiths G."/>
            <person name="Smith M."/>
            <person name="Glithero R."/>
            <person name="Howden P."/>
            <person name="Barker N."/>
            <person name="Lloyd C."/>
            <person name="Stevens C."/>
            <person name="Harley J."/>
            <person name="Holt K."/>
            <person name="Panagiotidis G."/>
            <person name="Lovell J."/>
            <person name="Beasley H."/>
            <person name="Henderson C."/>
            <person name="Gordon D."/>
            <person name="Auger K."/>
            <person name="Wright D."/>
            <person name="Collins J."/>
            <person name="Raisen C."/>
            <person name="Dyer L."/>
            <person name="Leung K."/>
            <person name="Robertson L."/>
            <person name="Ambridge K."/>
            <person name="Leongamornlert D."/>
            <person name="McGuire S."/>
            <person name="Gilderthorp R."/>
            <person name="Griffiths C."/>
            <person name="Manthravadi D."/>
            <person name="Nichol S."/>
            <person name="Barker G."/>
            <person name="Whitehead S."/>
            <person name="Kay M."/>
            <person name="Brown J."/>
            <person name="Murnane C."/>
            <person name="Gray E."/>
            <person name="Humphries M."/>
            <person name="Sycamore N."/>
            <person name="Barker D."/>
            <person name="Saunders D."/>
            <person name="Wallis J."/>
            <person name="Babbage A."/>
            <person name="Hammond S."/>
            <person name="Mashreghi-Mohammadi M."/>
            <person name="Barr L."/>
            <person name="Martin S."/>
            <person name="Wray P."/>
            <person name="Ellington A."/>
            <person name="Matthews N."/>
            <person name="Ellwood M."/>
            <person name="Woodmansey R."/>
            <person name="Clark G."/>
            <person name="Cooper J."/>
            <person name="Tromans A."/>
            <person name="Grafham D."/>
            <person name="Skuce C."/>
            <person name="Pandian R."/>
            <person name="Andrews R."/>
            <person name="Harrison E."/>
            <person name="Kimberley A."/>
            <person name="Garnett J."/>
            <person name="Fosker N."/>
            <person name="Hall R."/>
            <person name="Garner P."/>
            <person name="Kelly D."/>
            <person name="Bird C."/>
            <person name="Palmer S."/>
            <person name="Gehring I."/>
            <person name="Berger A."/>
            <person name="Dooley C.M."/>
            <person name="Ersan-Urun Z."/>
            <person name="Eser C."/>
            <person name="Geiger H."/>
            <person name="Geisler M."/>
            <person name="Karotki L."/>
            <person name="Kirn A."/>
            <person name="Konantz J."/>
            <person name="Konantz M."/>
            <person name="Oberlander M."/>
            <person name="Rudolph-Geiger S."/>
            <person name="Teucke M."/>
            <person name="Lanz C."/>
            <person name="Raddatz G."/>
            <person name="Osoegawa K."/>
            <person name="Zhu B."/>
            <person name="Rapp A."/>
            <person name="Widaa S."/>
            <person name="Langford C."/>
            <person name="Yang F."/>
            <person name="Schuster S.C."/>
            <person name="Carter N.P."/>
            <person name="Harrow J."/>
            <person name="Ning Z."/>
            <person name="Herrero J."/>
            <person name="Searle S.M."/>
            <person name="Enright A."/>
            <person name="Geisler R."/>
            <person name="Plasterk R.H."/>
            <person name="Lee C."/>
            <person name="Westerfield M."/>
            <person name="de Jong P.J."/>
            <person name="Zon L.I."/>
            <person name="Postlethwait J.H."/>
            <person name="Nusslein-Volhard C."/>
            <person name="Hubbard T.J."/>
            <person name="Roest Crollius H."/>
            <person name="Rogers J."/>
            <person name="Stemple D.L."/>
        </authorList>
    </citation>
    <scope>NUCLEOTIDE SEQUENCE [LARGE SCALE GENOMIC DNA]</scope>
    <source>
        <strain>Tuebingen</strain>
    </source>
</reference>
<reference key="2">
    <citation type="submission" date="2007-12" db="EMBL/GenBank/DDBJ databases">
        <authorList>
            <consortium name="NIH - Zebrafish Gene Collection (ZGC) project"/>
        </authorList>
    </citation>
    <scope>NUCLEOTIDE SEQUENCE [LARGE SCALE MRNA]</scope>
    <source>
        <tissue>Eye</tissue>
        <tissue>Ovary</tissue>
    </source>
</reference>
<reference key="3">
    <citation type="journal article" date="2012" name="Nature">
        <title>KCTD13 is a major driver of mirrored neuroanatomical phenotypes of the 16p11.2 copy number variant.</title>
        <authorList>
            <person name="Golzio C."/>
            <person name="Willer J."/>
            <person name="Talkowski M.E."/>
            <person name="Oh E.C."/>
            <person name="Taniguchi Y."/>
            <person name="Jacquemont S."/>
            <person name="Reymond A."/>
            <person name="Sun M."/>
            <person name="Sawa A."/>
            <person name="Gusella J.F."/>
            <person name="Kamiya A."/>
            <person name="Beckmann J.S."/>
            <person name="Katsanis N."/>
        </authorList>
    </citation>
    <scope>CAUTION</scope>
</reference>
<reference key="4">
    <citation type="journal article" date="2017" name="Nature">
        <title>Kctd13 deletion reduces synaptic transmission via increased RhoA.</title>
        <authorList>
            <person name="Escamilla C.O."/>
            <person name="Filonova I."/>
            <person name="Walker A.K."/>
            <person name="Xuan Z.X."/>
            <person name="Holehonnur R."/>
            <person name="Espinosa F."/>
            <person name="Liu S."/>
            <person name="Thyme S.B."/>
            <person name="Lopez-Garcia I.A."/>
            <person name="Mendoza D.B."/>
            <person name="Usui N."/>
            <person name="Ellegood J."/>
            <person name="Eisch A.J."/>
            <person name="Konopka G."/>
            <person name="Lerch J.P."/>
            <person name="Schier A.F."/>
            <person name="Speed H.E."/>
            <person name="Powell C.M."/>
        </authorList>
    </citation>
    <scope>FUNCTION</scope>
    <scope>DISRUPTION PHENOTYPE</scope>
</reference>
<gene>
    <name evidence="9" type="primary">kctd13</name>
</gene>